<dbReference type="EMBL" id="BA000018">
    <property type="protein sequence ID" value="BAB42806.1"/>
    <property type="molecule type" value="Genomic_DNA"/>
</dbReference>
<dbReference type="PIR" id="A89956">
    <property type="entry name" value="A89956"/>
</dbReference>
<dbReference type="RefSeq" id="WP_000244866.1">
    <property type="nucleotide sequence ID" value="NC_002745.2"/>
</dbReference>
<dbReference type="SMR" id="P64003"/>
<dbReference type="EnsemblBacteria" id="BAB42806">
    <property type="protein sequence ID" value="BAB42806"/>
    <property type="gene ID" value="BAB42806"/>
</dbReference>
<dbReference type="KEGG" id="sau:SA1539"/>
<dbReference type="HOGENOM" id="CLU_034079_1_0_9"/>
<dbReference type="GO" id="GO:0005886">
    <property type="term" value="C:plasma membrane"/>
    <property type="evidence" value="ECO:0007669"/>
    <property type="project" value="UniProtKB-SubCell"/>
</dbReference>
<dbReference type="GO" id="GO:0005940">
    <property type="term" value="C:septin ring"/>
    <property type="evidence" value="ECO:0007669"/>
    <property type="project" value="InterPro"/>
</dbReference>
<dbReference type="GO" id="GO:0000917">
    <property type="term" value="P:division septum assembly"/>
    <property type="evidence" value="ECO:0007669"/>
    <property type="project" value="UniProtKB-KW"/>
</dbReference>
<dbReference type="GO" id="GO:0000921">
    <property type="term" value="P:septin ring assembly"/>
    <property type="evidence" value="ECO:0007669"/>
    <property type="project" value="InterPro"/>
</dbReference>
<dbReference type="HAMAP" id="MF_00728">
    <property type="entry name" value="EzrA"/>
    <property type="match status" value="1"/>
</dbReference>
<dbReference type="InterPro" id="IPR010379">
    <property type="entry name" value="EzrA"/>
</dbReference>
<dbReference type="NCBIfam" id="NF003412">
    <property type="entry name" value="PRK04778.1-6"/>
    <property type="match status" value="1"/>
</dbReference>
<dbReference type="Pfam" id="PF06160">
    <property type="entry name" value="EzrA"/>
    <property type="match status" value="1"/>
</dbReference>
<accession>P64003</accession>
<accession>Q99TE6</accession>
<sequence length="564" mass="66228">MVLYIILAIIVIILIAVGVLFYLRSNKRQIIEKAIERKNEIETLPFDQNLAQLSKLNLKGETKTKYDAMKKDNVESTNKYLAPVEEKIHNAEALLDKFSFNASQSEIDDANELMDSYEQSYQQQLEDVNEIIALYKDNDELYDKCKVDYREMKRDVLANRHQFGEAASLLETEIEKFEPRLEQYEVLKADGNYVQAHNHIAALNEQMKQLRSYMEEIPELIRETQKELPGQFQDLKYGCRDLKVEGYDLDHVKVDSTLQSLKTELSFVEPLISRLELEEANDKLANINDKLDDMYDLIEHEVKAKNDVEETKDIITDNLFKAKDMNYTLQTEIEYVRENYYINESDAQSVRQFENEIQSLISVYDDILKEMSKSAVRYSEVQDNLQYLEDHVTVINDKQEKLQNHLIQLREDEAEAEDNLLRVQSKKEEVYRRLLASNLTSVPERFIIMKNEIDHEVRDVNEQFSERPIHVKQLKDKVSKIVIQMNTFEDEANDVLVNAVYAEKLIQYGNRYRKDYSNVDKSLNEAERLFKNNRYKRAIEIAEQVLESVEPGVTKHIEEEVIKQ</sequence>
<organism>
    <name type="scientific">Staphylococcus aureus (strain N315)</name>
    <dbReference type="NCBI Taxonomy" id="158879"/>
    <lineage>
        <taxon>Bacteria</taxon>
        <taxon>Bacillati</taxon>
        <taxon>Bacillota</taxon>
        <taxon>Bacilli</taxon>
        <taxon>Bacillales</taxon>
        <taxon>Staphylococcaceae</taxon>
        <taxon>Staphylococcus</taxon>
    </lineage>
</organism>
<gene>
    <name evidence="1" type="primary">ezrA</name>
    <name type="ordered locus">SA1539</name>
</gene>
<proteinExistence type="evidence at protein level"/>
<feature type="chain" id="PRO_0000172880" description="Septation ring formation regulator EzrA">
    <location>
        <begin position="1"/>
        <end position="564"/>
    </location>
</feature>
<feature type="topological domain" description="Extracellular" evidence="1">
    <location>
        <begin position="1"/>
        <end position="4"/>
    </location>
</feature>
<feature type="transmembrane region" description="Helical" evidence="1">
    <location>
        <begin position="5"/>
        <end position="23"/>
    </location>
</feature>
<feature type="topological domain" description="Cytoplasmic" evidence="1">
    <location>
        <begin position="24"/>
        <end position="564"/>
    </location>
</feature>
<feature type="coiled-coil region" evidence="1">
    <location>
        <begin position="99"/>
        <end position="138"/>
    </location>
</feature>
<feature type="coiled-coil region" evidence="1">
    <location>
        <begin position="190"/>
        <end position="223"/>
    </location>
</feature>
<feature type="coiled-coil region" evidence="1">
    <location>
        <begin position="271"/>
        <end position="300"/>
    </location>
</feature>
<feature type="coiled-coil region" evidence="1">
    <location>
        <begin position="350"/>
        <end position="435"/>
    </location>
</feature>
<feature type="coiled-coil region" evidence="1">
    <location>
        <begin position="471"/>
        <end position="550"/>
    </location>
</feature>
<name>EZRA_STAAN</name>
<comment type="function">
    <text evidence="1">Negative regulator of FtsZ ring formation; modulates the frequency and position of FtsZ ring formation. Inhibits FtsZ ring formation at polar sites. Interacts either with FtsZ or with one of its binding partners to promote depolymerization.</text>
</comment>
<comment type="subcellular location">
    <subcellularLocation>
        <location>Cell membrane</location>
        <topology>Single-pass membrane protein</topology>
    </subcellularLocation>
    <text evidence="1">Colocalized with FtsZ to the nascent septal site.</text>
</comment>
<comment type="similarity">
    <text evidence="1">Belongs to the EzrA family.</text>
</comment>
<reference key="1">
    <citation type="journal article" date="2001" name="Lancet">
        <title>Whole genome sequencing of meticillin-resistant Staphylococcus aureus.</title>
        <authorList>
            <person name="Kuroda M."/>
            <person name="Ohta T."/>
            <person name="Uchiyama I."/>
            <person name="Baba T."/>
            <person name="Yuzawa H."/>
            <person name="Kobayashi I."/>
            <person name="Cui L."/>
            <person name="Oguchi A."/>
            <person name="Aoki K."/>
            <person name="Nagai Y."/>
            <person name="Lian J.-Q."/>
            <person name="Ito T."/>
            <person name="Kanamori M."/>
            <person name="Matsumaru H."/>
            <person name="Maruyama A."/>
            <person name="Murakami H."/>
            <person name="Hosoyama A."/>
            <person name="Mizutani-Ui Y."/>
            <person name="Takahashi N.K."/>
            <person name="Sawano T."/>
            <person name="Inoue R."/>
            <person name="Kaito C."/>
            <person name="Sekimizu K."/>
            <person name="Hirakawa H."/>
            <person name="Kuhara S."/>
            <person name="Goto S."/>
            <person name="Yabuzaki J."/>
            <person name="Kanehisa M."/>
            <person name="Yamashita A."/>
            <person name="Oshima K."/>
            <person name="Furuya K."/>
            <person name="Yoshino C."/>
            <person name="Shiba T."/>
            <person name="Hattori M."/>
            <person name="Ogasawara N."/>
            <person name="Hayashi H."/>
            <person name="Hiramatsu K."/>
        </authorList>
    </citation>
    <scope>NUCLEOTIDE SEQUENCE [LARGE SCALE GENOMIC DNA]</scope>
    <source>
        <strain>N315</strain>
    </source>
</reference>
<reference key="2">
    <citation type="submission" date="2007-10" db="UniProtKB">
        <title>Shotgun proteomic analysis of total and membrane protein extracts of S. aureus strain N315.</title>
        <authorList>
            <person name="Vaezzadeh A.R."/>
            <person name="Deshusses J."/>
            <person name="Lescuyer P."/>
            <person name="Hochstrasser D.F."/>
        </authorList>
    </citation>
    <scope>IDENTIFICATION BY MASS SPECTROMETRY [LARGE SCALE ANALYSIS]</scope>
    <source>
        <strain>N315</strain>
    </source>
</reference>
<protein>
    <recommendedName>
        <fullName evidence="1">Septation ring formation regulator EzrA</fullName>
    </recommendedName>
</protein>
<evidence type="ECO:0000255" key="1">
    <source>
        <dbReference type="HAMAP-Rule" id="MF_00728"/>
    </source>
</evidence>
<keyword id="KW-0131">Cell cycle</keyword>
<keyword id="KW-0132">Cell division</keyword>
<keyword id="KW-1003">Cell membrane</keyword>
<keyword id="KW-0175">Coiled coil</keyword>
<keyword id="KW-0472">Membrane</keyword>
<keyword id="KW-0717">Septation</keyword>
<keyword id="KW-0812">Transmembrane</keyword>
<keyword id="KW-1133">Transmembrane helix</keyword>